<evidence type="ECO:0000255" key="1">
    <source>
        <dbReference type="HAMAP-Rule" id="MF_01417"/>
    </source>
</evidence>
<evidence type="ECO:0000305" key="2"/>
<organism>
    <name type="scientific">Vibrio cholerae serotype O1 (strain ATCC 39315 / El Tor Inaba N16961)</name>
    <dbReference type="NCBI Taxonomy" id="243277"/>
    <lineage>
        <taxon>Bacteria</taxon>
        <taxon>Pseudomonadati</taxon>
        <taxon>Pseudomonadota</taxon>
        <taxon>Gammaproteobacteria</taxon>
        <taxon>Vibrionales</taxon>
        <taxon>Vibrionaceae</taxon>
        <taxon>Vibrio</taxon>
    </lineage>
</organism>
<reference key="1">
    <citation type="journal article" date="2000" name="Nature">
        <title>DNA sequence of both chromosomes of the cholera pathogen Vibrio cholerae.</title>
        <authorList>
            <person name="Heidelberg J.F."/>
            <person name="Eisen J.A."/>
            <person name="Nelson W.C."/>
            <person name="Clayton R.A."/>
            <person name="Gwinn M.L."/>
            <person name="Dodson R.J."/>
            <person name="Haft D.H."/>
            <person name="Hickey E.K."/>
            <person name="Peterson J.D."/>
            <person name="Umayam L.A."/>
            <person name="Gill S.R."/>
            <person name="Nelson K.E."/>
            <person name="Read T.D."/>
            <person name="Tettelin H."/>
            <person name="Richardson D.L."/>
            <person name="Ermolaeva M.D."/>
            <person name="Vamathevan J.J."/>
            <person name="Bass S."/>
            <person name="Qin H."/>
            <person name="Dragoi I."/>
            <person name="Sellers P."/>
            <person name="McDonald L.A."/>
            <person name="Utterback T.R."/>
            <person name="Fleischmann R.D."/>
            <person name="Nierman W.C."/>
            <person name="White O."/>
            <person name="Salzberg S.L."/>
            <person name="Smith H.O."/>
            <person name="Colwell R.R."/>
            <person name="Mekalanos J.J."/>
            <person name="Venter J.C."/>
            <person name="Fraser C.M."/>
        </authorList>
    </citation>
    <scope>NUCLEOTIDE SEQUENCE [LARGE SCALE GENOMIC DNA]</scope>
    <source>
        <strain>ATCC 39315 / El Tor Inaba N16961</strain>
    </source>
</reference>
<comment type="function">
    <text evidence="1">Catalyzes the biosynthesis of agmatine from arginine.</text>
</comment>
<comment type="catalytic activity">
    <reaction evidence="1">
        <text>L-arginine + H(+) = agmatine + CO2</text>
        <dbReference type="Rhea" id="RHEA:17641"/>
        <dbReference type="ChEBI" id="CHEBI:15378"/>
        <dbReference type="ChEBI" id="CHEBI:16526"/>
        <dbReference type="ChEBI" id="CHEBI:32682"/>
        <dbReference type="ChEBI" id="CHEBI:58145"/>
        <dbReference type="EC" id="4.1.1.19"/>
    </reaction>
</comment>
<comment type="cofactor">
    <cofactor evidence="1">
        <name>Mg(2+)</name>
        <dbReference type="ChEBI" id="CHEBI:18420"/>
    </cofactor>
</comment>
<comment type="cofactor">
    <cofactor evidence="1">
        <name>pyridoxal 5'-phosphate</name>
        <dbReference type="ChEBI" id="CHEBI:597326"/>
    </cofactor>
</comment>
<comment type="similarity">
    <text evidence="1">Belongs to the Orn/Lys/Arg decarboxylase class-II family. SpeA subfamily.</text>
</comment>
<comment type="sequence caution" evidence="2">
    <conflict type="erroneous initiation">
        <sequence resource="EMBL-CDS" id="AAF96713"/>
    </conflict>
</comment>
<sequence>MRYDVEQPSKLDRVRADYNVHYWSQGFFGIDDQGEVYVSPRKDKAHQTQLSSIVKQLEARDLNLPVLVRFPQILHQRVHNICDAFNQAIEEYDYPNKYLLVYPIKVNQQKEVVDEILASQAELEHKQLGLEAGSKPELLAVLAMAQQASSVIVCNGYKDREYIRLALIGEKLGHKVFIVLEKLSELDLVLKEAKSLGVKPRLGLRIRLASQGAGKWQSSGGEKSKFGLAASQVLTVINRLKAENQLEALQLVHFHLGSQMANIRDVRNGVNEAVRFYCELRELGAHIDFFDVGGGLAVDYDGTRSQSSNSMNYGLHEYARNIVSTVSDVCNLYGQPRPVIISESGRSITAHHAVLITNVIGTEAYSPEEIPAPGADAPMLLKNMWRGFEEVQHGTDDRALIEIYNDTQSDLSEAHSQFATGVLNLEHRAWAEQLSLRIYHELRQKMSNKNRFHRPILDELQERLADKFFVNFSLFQSLPDAWGIDQVFPVLPLSGLEEMNDRRAVMLDITCDSDGAVEQYVEGQGIESTLPVPAWTSDKPYLMGFFLVGAYQEILGDMHNLFGDTHSAVVNINDNGESEIAFINEGDTVEDMMRYVHIDVDKIRTNYRQLVSQRVAKEEQETVLAELELGLSGYTYLEDF</sequence>
<dbReference type="EC" id="4.1.1.19" evidence="1"/>
<dbReference type="EMBL" id="AE003853">
    <property type="protein sequence ID" value="AAF96713.1"/>
    <property type="status" value="ALT_INIT"/>
    <property type="molecule type" value="Genomic_DNA"/>
</dbReference>
<dbReference type="PIR" id="E82414">
    <property type="entry name" value="E82414"/>
</dbReference>
<dbReference type="RefSeq" id="NP_233201.1">
    <property type="nucleotide sequence ID" value="NC_002506.1"/>
</dbReference>
<dbReference type="SMR" id="Q9KLD1"/>
<dbReference type="STRING" id="243277.VC_A0815"/>
<dbReference type="DNASU" id="2611850"/>
<dbReference type="EnsemblBacteria" id="AAF96713">
    <property type="protein sequence ID" value="AAF96713"/>
    <property type="gene ID" value="VC_A0815"/>
</dbReference>
<dbReference type="KEGG" id="vch:VC_A0815"/>
<dbReference type="PATRIC" id="fig|243277.26.peg.3435"/>
<dbReference type="eggNOG" id="COG1166">
    <property type="taxonomic scope" value="Bacteria"/>
</dbReference>
<dbReference type="HOGENOM" id="CLU_027243_1_0_6"/>
<dbReference type="Proteomes" id="UP000000584">
    <property type="component" value="Chromosome 2"/>
</dbReference>
<dbReference type="GO" id="GO:0008792">
    <property type="term" value="F:arginine decarboxylase activity"/>
    <property type="evidence" value="ECO:0000318"/>
    <property type="project" value="GO_Central"/>
</dbReference>
<dbReference type="GO" id="GO:0046872">
    <property type="term" value="F:metal ion binding"/>
    <property type="evidence" value="ECO:0007669"/>
    <property type="project" value="UniProtKB-KW"/>
</dbReference>
<dbReference type="GO" id="GO:0006527">
    <property type="term" value="P:arginine catabolic process"/>
    <property type="evidence" value="ECO:0007669"/>
    <property type="project" value="InterPro"/>
</dbReference>
<dbReference type="GO" id="GO:0033388">
    <property type="term" value="P:putrescine biosynthetic process from arginine"/>
    <property type="evidence" value="ECO:0000318"/>
    <property type="project" value="GO_Central"/>
</dbReference>
<dbReference type="GO" id="GO:0008295">
    <property type="term" value="P:spermidine biosynthetic process"/>
    <property type="evidence" value="ECO:0007669"/>
    <property type="project" value="UniProtKB-UniRule"/>
</dbReference>
<dbReference type="CDD" id="cd06830">
    <property type="entry name" value="PLPDE_III_ADC"/>
    <property type="match status" value="1"/>
</dbReference>
<dbReference type="FunFam" id="1.10.287.3440:FF:000001">
    <property type="entry name" value="Biosynthetic arginine decarboxylase"/>
    <property type="match status" value="1"/>
</dbReference>
<dbReference type="FunFam" id="2.40.37.10:FF:000001">
    <property type="entry name" value="Biosynthetic arginine decarboxylase"/>
    <property type="match status" value="1"/>
</dbReference>
<dbReference type="FunFam" id="3.20.20.10:FF:000001">
    <property type="entry name" value="Biosynthetic arginine decarboxylase"/>
    <property type="match status" value="1"/>
</dbReference>
<dbReference type="Gene3D" id="1.10.287.3440">
    <property type="match status" value="1"/>
</dbReference>
<dbReference type="Gene3D" id="1.20.58.930">
    <property type="match status" value="1"/>
</dbReference>
<dbReference type="Gene3D" id="3.20.20.10">
    <property type="entry name" value="Alanine racemase"/>
    <property type="match status" value="1"/>
</dbReference>
<dbReference type="Gene3D" id="2.40.37.10">
    <property type="entry name" value="Lyase, Ornithine Decarboxylase, Chain A, domain 1"/>
    <property type="match status" value="1"/>
</dbReference>
<dbReference type="HAMAP" id="MF_01417">
    <property type="entry name" value="SpeA"/>
    <property type="match status" value="1"/>
</dbReference>
<dbReference type="InterPro" id="IPR009006">
    <property type="entry name" value="Ala_racemase/Decarboxylase_C"/>
</dbReference>
<dbReference type="InterPro" id="IPR040634">
    <property type="entry name" value="Arg_decarb_HB"/>
</dbReference>
<dbReference type="InterPro" id="IPR041128">
    <property type="entry name" value="Arg_decarbox_C"/>
</dbReference>
<dbReference type="InterPro" id="IPR002985">
    <property type="entry name" value="Arg_decrbxlase"/>
</dbReference>
<dbReference type="InterPro" id="IPR022644">
    <property type="entry name" value="De-COase2_N"/>
</dbReference>
<dbReference type="InterPro" id="IPR000183">
    <property type="entry name" value="Orn/DAP/Arg_de-COase"/>
</dbReference>
<dbReference type="InterPro" id="IPR029066">
    <property type="entry name" value="PLP-binding_barrel"/>
</dbReference>
<dbReference type="NCBIfam" id="NF003763">
    <property type="entry name" value="PRK05354.1"/>
    <property type="match status" value="1"/>
</dbReference>
<dbReference type="NCBIfam" id="TIGR01273">
    <property type="entry name" value="speA"/>
    <property type="match status" value="1"/>
</dbReference>
<dbReference type="PANTHER" id="PTHR43295">
    <property type="entry name" value="ARGININE DECARBOXYLASE"/>
    <property type="match status" value="1"/>
</dbReference>
<dbReference type="PANTHER" id="PTHR43295:SF9">
    <property type="entry name" value="BIOSYNTHETIC ARGININE DECARBOXYLASE"/>
    <property type="match status" value="1"/>
</dbReference>
<dbReference type="Pfam" id="PF17810">
    <property type="entry name" value="Arg_decarb_HB"/>
    <property type="match status" value="1"/>
</dbReference>
<dbReference type="Pfam" id="PF17944">
    <property type="entry name" value="Arg_decarbox_C"/>
    <property type="match status" value="1"/>
</dbReference>
<dbReference type="Pfam" id="PF02784">
    <property type="entry name" value="Orn_Arg_deC_N"/>
    <property type="match status" value="1"/>
</dbReference>
<dbReference type="PIRSF" id="PIRSF001336">
    <property type="entry name" value="Arg_decrbxlase"/>
    <property type="match status" value="1"/>
</dbReference>
<dbReference type="PRINTS" id="PR01180">
    <property type="entry name" value="ARGDCRBXLASE"/>
</dbReference>
<dbReference type="PRINTS" id="PR01179">
    <property type="entry name" value="ODADCRBXLASE"/>
</dbReference>
<dbReference type="SUPFAM" id="SSF51419">
    <property type="entry name" value="PLP-binding barrel"/>
    <property type="match status" value="1"/>
</dbReference>
<keyword id="KW-0210">Decarboxylase</keyword>
<keyword id="KW-0456">Lyase</keyword>
<keyword id="KW-0460">Magnesium</keyword>
<keyword id="KW-0479">Metal-binding</keyword>
<keyword id="KW-0620">Polyamine biosynthesis</keyword>
<keyword id="KW-0663">Pyridoxal phosphate</keyword>
<keyword id="KW-1185">Reference proteome</keyword>
<keyword id="KW-0745">Spermidine biosynthesis</keyword>
<accession>Q9KLD1</accession>
<gene>
    <name evidence="1" type="primary">speA</name>
    <name type="ordered locus">VC_A0815</name>
</gene>
<name>SPEA_VIBCH</name>
<proteinExistence type="inferred from homology"/>
<protein>
    <recommendedName>
        <fullName evidence="1">Biosynthetic arginine decarboxylase</fullName>
        <shortName evidence="1">ADC</shortName>
        <ecNumber evidence="1">4.1.1.19</ecNumber>
    </recommendedName>
</protein>
<feature type="chain" id="PRO_0000149983" description="Biosynthetic arginine decarboxylase">
    <location>
        <begin position="1"/>
        <end position="640"/>
    </location>
</feature>
<feature type="binding site" evidence="1">
    <location>
        <begin position="290"/>
        <end position="300"/>
    </location>
    <ligand>
        <name>substrate</name>
    </ligand>
</feature>
<feature type="modified residue" description="N6-(pyridoxal phosphate)lysine" evidence="1">
    <location>
        <position position="105"/>
    </location>
</feature>